<feature type="chain" id="PRO_0000062741" description="Cell division protein FtsA">
    <location>
        <begin position="1"/>
        <end position="493"/>
    </location>
</feature>
<feature type="region of interest" description="Disordered" evidence="2">
    <location>
        <begin position="434"/>
        <end position="468"/>
    </location>
</feature>
<feature type="compositionally biased region" description="Polar residues" evidence="2">
    <location>
        <begin position="436"/>
        <end position="465"/>
    </location>
</feature>
<protein>
    <recommendedName>
        <fullName evidence="1">Cell division protein FtsA</fullName>
    </recommendedName>
</protein>
<reference key="1">
    <citation type="journal article" date="1999" name="Nature">
        <title>Genomic sequence comparison of two unrelated isolates of the human gastric pathogen Helicobacter pylori.</title>
        <authorList>
            <person name="Alm R.A."/>
            <person name="Ling L.-S.L."/>
            <person name="Moir D.T."/>
            <person name="King B.L."/>
            <person name="Brown E.D."/>
            <person name="Doig P.C."/>
            <person name="Smith D.R."/>
            <person name="Noonan B."/>
            <person name="Guild B.C."/>
            <person name="deJonge B.L."/>
            <person name="Carmel G."/>
            <person name="Tummino P.J."/>
            <person name="Caruso A."/>
            <person name="Uria-Nickelsen M."/>
            <person name="Mills D.M."/>
            <person name="Ives C."/>
            <person name="Gibson R."/>
            <person name="Merberg D."/>
            <person name="Mills S.D."/>
            <person name="Jiang Q."/>
            <person name="Taylor D.E."/>
            <person name="Vovis G.F."/>
            <person name="Trust T.J."/>
        </authorList>
    </citation>
    <scope>NUCLEOTIDE SEQUENCE [LARGE SCALE GENOMIC DNA]</scope>
    <source>
        <strain>J99 / ATCC 700824</strain>
    </source>
</reference>
<dbReference type="EMBL" id="AE001439">
    <property type="protein sequence ID" value="AAD06487.1"/>
    <property type="molecule type" value="Genomic_DNA"/>
</dbReference>
<dbReference type="PIR" id="C71873">
    <property type="entry name" value="C71873"/>
</dbReference>
<dbReference type="RefSeq" id="WP_000400178.1">
    <property type="nucleotide sequence ID" value="NC_000921.1"/>
</dbReference>
<dbReference type="SMR" id="Q9ZKM3"/>
<dbReference type="KEGG" id="hpj:jhp_0912"/>
<dbReference type="eggNOG" id="COG0849">
    <property type="taxonomic scope" value="Bacteria"/>
</dbReference>
<dbReference type="Proteomes" id="UP000000804">
    <property type="component" value="Chromosome"/>
</dbReference>
<dbReference type="GO" id="GO:0032153">
    <property type="term" value="C:cell division site"/>
    <property type="evidence" value="ECO:0007669"/>
    <property type="project" value="UniProtKB-UniRule"/>
</dbReference>
<dbReference type="GO" id="GO:0009898">
    <property type="term" value="C:cytoplasmic side of plasma membrane"/>
    <property type="evidence" value="ECO:0007669"/>
    <property type="project" value="UniProtKB-UniRule"/>
</dbReference>
<dbReference type="GO" id="GO:0043093">
    <property type="term" value="P:FtsZ-dependent cytokinesis"/>
    <property type="evidence" value="ECO:0007669"/>
    <property type="project" value="UniProtKB-UniRule"/>
</dbReference>
<dbReference type="CDD" id="cd24048">
    <property type="entry name" value="ASKHA_NBD_FtsA"/>
    <property type="match status" value="1"/>
</dbReference>
<dbReference type="FunFam" id="3.30.420.40:FF:000481">
    <property type="entry name" value="Cell division protein FtsA"/>
    <property type="match status" value="1"/>
</dbReference>
<dbReference type="Gene3D" id="3.30.1490.110">
    <property type="match status" value="1"/>
</dbReference>
<dbReference type="Gene3D" id="3.30.420.40">
    <property type="match status" value="1"/>
</dbReference>
<dbReference type="HAMAP" id="MF_02033">
    <property type="entry name" value="FtsA"/>
    <property type="match status" value="1"/>
</dbReference>
<dbReference type="InterPro" id="IPR043129">
    <property type="entry name" value="ATPase_NBD"/>
</dbReference>
<dbReference type="InterPro" id="IPR020823">
    <property type="entry name" value="Cell_div_FtsA"/>
</dbReference>
<dbReference type="InterPro" id="IPR050696">
    <property type="entry name" value="FtsA/MreB"/>
</dbReference>
<dbReference type="InterPro" id="IPR003494">
    <property type="entry name" value="SHS2_FtsA"/>
</dbReference>
<dbReference type="NCBIfam" id="TIGR01174">
    <property type="entry name" value="ftsA"/>
    <property type="match status" value="1"/>
</dbReference>
<dbReference type="PANTHER" id="PTHR32432:SF4">
    <property type="entry name" value="CELL DIVISION PROTEIN FTSA"/>
    <property type="match status" value="1"/>
</dbReference>
<dbReference type="PANTHER" id="PTHR32432">
    <property type="entry name" value="CELL DIVISION PROTEIN FTSA-RELATED"/>
    <property type="match status" value="1"/>
</dbReference>
<dbReference type="Pfam" id="PF14450">
    <property type="entry name" value="FtsA"/>
    <property type="match status" value="1"/>
</dbReference>
<dbReference type="Pfam" id="PF02491">
    <property type="entry name" value="SHS2_FTSA"/>
    <property type="match status" value="1"/>
</dbReference>
<dbReference type="SMART" id="SM00842">
    <property type="entry name" value="FtsA"/>
    <property type="match status" value="1"/>
</dbReference>
<dbReference type="SUPFAM" id="SSF53067">
    <property type="entry name" value="Actin-like ATPase domain"/>
    <property type="match status" value="2"/>
</dbReference>
<evidence type="ECO:0000255" key="1">
    <source>
        <dbReference type="HAMAP-Rule" id="MF_02033"/>
    </source>
</evidence>
<evidence type="ECO:0000256" key="2">
    <source>
        <dbReference type="SAM" id="MobiDB-lite"/>
    </source>
</evidence>
<comment type="function">
    <text evidence="1">Cell division protein that is involved in the assembly of the Z ring. May serve as a membrane anchor for the Z ring.</text>
</comment>
<comment type="subunit">
    <text evidence="1">Self-interacts. Interacts with FtsZ.</text>
</comment>
<comment type="subcellular location">
    <subcellularLocation>
        <location evidence="1">Cell inner membrane</location>
        <topology evidence="1">Peripheral membrane protein</topology>
        <orientation evidence="1">Cytoplasmic side</orientation>
    </subcellularLocation>
    <text evidence="1">Localizes to the Z ring in an FtsZ-dependent manner. Targeted to the membrane through a conserved C-terminal amphipathic helix.</text>
</comment>
<comment type="similarity">
    <text evidence="1">Belongs to the FtsA/MreB family.</text>
</comment>
<sequence length="493" mass="54692">MEHKEIVIGVDIGSRKICAIVAEFKDGILRIIGTAHQDSKEINSKAIKRGRINSLAHASNAIKEVINSAKKMAGLNADEDRNNPISSFRESYHPKTKAIVSFSGAYTESIRDVTGVASTKDNVVTIDEINRAINNACAKAGLDNDKHILHALPYRFTLDKQEVNDPLGMSGTRLEVFIHIVYTEKNNIENLEKIMIQSGVEIENIVINSYAASIATLSNDERELGVACVDMGGETCNLTIYSGNSIRYNKYLPVGSHHLTTDLSHMLNTPFPYAEEVKIKYGDLSFESGAETPSQSVQIPTTGSDGHESHIVPLSEIQTIMRERALETFKIIHRSIQDSGFEEHLGGGVVLTGGMALMKGIKELARTHFTNYPVRLATPVEKYNIMGMFEDLKDPRFSVVVGLILYKAGGHTNYERDSKGIIRYHESDDYIRKAHQSNPTPHIHSSPTERNLSDLKTPSAPLNTAKNDDFLPIKPTEQKGFFQNLLDKISKIF</sequence>
<name>FTSA_HELPJ</name>
<proteinExistence type="inferred from homology"/>
<gene>
    <name evidence="1" type="primary">ftsA</name>
    <name type="ordered locus">jhp_0912</name>
</gene>
<accession>Q9ZKM3</accession>
<organism>
    <name type="scientific">Helicobacter pylori (strain J99 / ATCC 700824)</name>
    <name type="common">Campylobacter pylori J99</name>
    <dbReference type="NCBI Taxonomy" id="85963"/>
    <lineage>
        <taxon>Bacteria</taxon>
        <taxon>Pseudomonadati</taxon>
        <taxon>Campylobacterota</taxon>
        <taxon>Epsilonproteobacteria</taxon>
        <taxon>Campylobacterales</taxon>
        <taxon>Helicobacteraceae</taxon>
        <taxon>Helicobacter</taxon>
    </lineage>
</organism>
<keyword id="KW-0131">Cell cycle</keyword>
<keyword id="KW-0132">Cell division</keyword>
<keyword id="KW-0997">Cell inner membrane</keyword>
<keyword id="KW-1003">Cell membrane</keyword>
<keyword id="KW-0472">Membrane</keyword>